<gene>
    <name evidence="1" type="primary">queA</name>
    <name type="ordered locus">CKO_02756</name>
</gene>
<organism>
    <name type="scientific">Citrobacter koseri (strain ATCC BAA-895 / CDC 4225-83 / SGSC4696)</name>
    <dbReference type="NCBI Taxonomy" id="290338"/>
    <lineage>
        <taxon>Bacteria</taxon>
        <taxon>Pseudomonadati</taxon>
        <taxon>Pseudomonadota</taxon>
        <taxon>Gammaproteobacteria</taxon>
        <taxon>Enterobacterales</taxon>
        <taxon>Enterobacteriaceae</taxon>
        <taxon>Citrobacter</taxon>
    </lineage>
</organism>
<evidence type="ECO:0000255" key="1">
    <source>
        <dbReference type="HAMAP-Rule" id="MF_00113"/>
    </source>
</evidence>
<feature type="chain" id="PRO_1000015197" description="S-adenosylmethionine:tRNA ribosyltransferase-isomerase">
    <location>
        <begin position="1"/>
        <end position="356"/>
    </location>
</feature>
<name>QUEA_CITK8</name>
<protein>
    <recommendedName>
        <fullName evidence="1">S-adenosylmethionine:tRNA ribosyltransferase-isomerase</fullName>
        <ecNumber evidence="1">2.4.99.17</ecNumber>
    </recommendedName>
    <alternativeName>
        <fullName evidence="1">Queuosine biosynthesis protein QueA</fullName>
    </alternativeName>
</protein>
<accession>A8AK49</accession>
<sequence length="356" mass="39388">MRVTDFSFELPESLIAHYPQPERSRCRLLSLDGPTGALTHGTFTDLLDKLNPGDLLVFNNTRVIPARLFGRKASGGKIEVLVERMLDDKRILAHIRASKAPKPGAELLLGDDESINATMTARHGALFEVEFNDARPVLEILNAIGHMPLPPYIDRPDEDADRELYQTVYSEKPGAVAAPTAGLHFDDPLLAALREKGIEMAFVTLHVGAGTFQPVRVETIEDHIMHSEYAEVPQEVVDAVLAAKARGNRIIAVGTTSVRSLESAAQAAKNDLIEPFFGDTQIFIYPGYQYKVIDALVTNFHLPESTLIMLVSAFAGYQHTMNAYKAAVEQNYRFFSYGDAMFITYNPQALNERVGK</sequence>
<proteinExistence type="inferred from homology"/>
<dbReference type="EC" id="2.4.99.17" evidence="1"/>
<dbReference type="EMBL" id="CP000822">
    <property type="protein sequence ID" value="ABV13862.1"/>
    <property type="molecule type" value="Genomic_DNA"/>
</dbReference>
<dbReference type="RefSeq" id="WP_012133575.1">
    <property type="nucleotide sequence ID" value="NC_009792.1"/>
</dbReference>
<dbReference type="SMR" id="A8AK49"/>
<dbReference type="STRING" id="290338.CKO_02756"/>
<dbReference type="GeneID" id="45136610"/>
<dbReference type="KEGG" id="cko:CKO_02756"/>
<dbReference type="HOGENOM" id="CLU_039110_1_0_6"/>
<dbReference type="OrthoDB" id="9805933at2"/>
<dbReference type="UniPathway" id="UPA00392"/>
<dbReference type="Proteomes" id="UP000008148">
    <property type="component" value="Chromosome"/>
</dbReference>
<dbReference type="GO" id="GO:0005737">
    <property type="term" value="C:cytoplasm"/>
    <property type="evidence" value="ECO:0007669"/>
    <property type="project" value="UniProtKB-SubCell"/>
</dbReference>
<dbReference type="GO" id="GO:0051075">
    <property type="term" value="F:S-adenosylmethionine:tRNA ribosyltransferase-isomerase activity"/>
    <property type="evidence" value="ECO:0007669"/>
    <property type="project" value="UniProtKB-EC"/>
</dbReference>
<dbReference type="GO" id="GO:0008616">
    <property type="term" value="P:queuosine biosynthetic process"/>
    <property type="evidence" value="ECO:0007669"/>
    <property type="project" value="UniProtKB-UniRule"/>
</dbReference>
<dbReference type="GO" id="GO:0002099">
    <property type="term" value="P:tRNA wobble guanine modification"/>
    <property type="evidence" value="ECO:0007669"/>
    <property type="project" value="TreeGrafter"/>
</dbReference>
<dbReference type="FunFam" id="2.40.10.240:FF:000001">
    <property type="entry name" value="S-adenosylmethionine:tRNA ribosyltransferase-isomerase"/>
    <property type="match status" value="1"/>
</dbReference>
<dbReference type="FunFam" id="3.40.1780.10:FF:000001">
    <property type="entry name" value="S-adenosylmethionine:tRNA ribosyltransferase-isomerase"/>
    <property type="match status" value="1"/>
</dbReference>
<dbReference type="Gene3D" id="2.40.10.240">
    <property type="entry name" value="QueA-like"/>
    <property type="match status" value="1"/>
</dbReference>
<dbReference type="Gene3D" id="3.40.1780.10">
    <property type="entry name" value="QueA-like"/>
    <property type="match status" value="1"/>
</dbReference>
<dbReference type="HAMAP" id="MF_00113">
    <property type="entry name" value="QueA"/>
    <property type="match status" value="1"/>
</dbReference>
<dbReference type="InterPro" id="IPR003699">
    <property type="entry name" value="QueA"/>
</dbReference>
<dbReference type="InterPro" id="IPR042118">
    <property type="entry name" value="QueA_dom1"/>
</dbReference>
<dbReference type="InterPro" id="IPR042119">
    <property type="entry name" value="QueA_dom2"/>
</dbReference>
<dbReference type="InterPro" id="IPR036100">
    <property type="entry name" value="QueA_sf"/>
</dbReference>
<dbReference type="NCBIfam" id="NF001140">
    <property type="entry name" value="PRK00147.1"/>
    <property type="match status" value="1"/>
</dbReference>
<dbReference type="NCBIfam" id="TIGR00113">
    <property type="entry name" value="queA"/>
    <property type="match status" value="1"/>
</dbReference>
<dbReference type="PANTHER" id="PTHR30307">
    <property type="entry name" value="S-ADENOSYLMETHIONINE:TRNA RIBOSYLTRANSFERASE-ISOMERASE"/>
    <property type="match status" value="1"/>
</dbReference>
<dbReference type="PANTHER" id="PTHR30307:SF0">
    <property type="entry name" value="S-ADENOSYLMETHIONINE:TRNA RIBOSYLTRANSFERASE-ISOMERASE"/>
    <property type="match status" value="1"/>
</dbReference>
<dbReference type="Pfam" id="PF02547">
    <property type="entry name" value="Queuosine_synth"/>
    <property type="match status" value="1"/>
</dbReference>
<dbReference type="SUPFAM" id="SSF111337">
    <property type="entry name" value="QueA-like"/>
    <property type="match status" value="1"/>
</dbReference>
<comment type="function">
    <text evidence="1">Transfers and isomerizes the ribose moiety from AdoMet to the 7-aminomethyl group of 7-deazaguanine (preQ1-tRNA) to give epoxyqueuosine (oQ-tRNA).</text>
</comment>
<comment type="catalytic activity">
    <reaction evidence="1">
        <text>7-aminomethyl-7-carbaguanosine(34) in tRNA + S-adenosyl-L-methionine = epoxyqueuosine(34) in tRNA + adenine + L-methionine + 2 H(+)</text>
        <dbReference type="Rhea" id="RHEA:32155"/>
        <dbReference type="Rhea" id="RHEA-COMP:10342"/>
        <dbReference type="Rhea" id="RHEA-COMP:18582"/>
        <dbReference type="ChEBI" id="CHEBI:15378"/>
        <dbReference type="ChEBI" id="CHEBI:16708"/>
        <dbReference type="ChEBI" id="CHEBI:57844"/>
        <dbReference type="ChEBI" id="CHEBI:59789"/>
        <dbReference type="ChEBI" id="CHEBI:82833"/>
        <dbReference type="ChEBI" id="CHEBI:194443"/>
        <dbReference type="EC" id="2.4.99.17"/>
    </reaction>
</comment>
<comment type="pathway">
    <text evidence="1">tRNA modification; tRNA-queuosine biosynthesis.</text>
</comment>
<comment type="subunit">
    <text evidence="1">Monomer.</text>
</comment>
<comment type="subcellular location">
    <subcellularLocation>
        <location evidence="1">Cytoplasm</location>
    </subcellularLocation>
</comment>
<comment type="similarity">
    <text evidence="1">Belongs to the QueA family.</text>
</comment>
<keyword id="KW-0963">Cytoplasm</keyword>
<keyword id="KW-0671">Queuosine biosynthesis</keyword>
<keyword id="KW-1185">Reference proteome</keyword>
<keyword id="KW-0949">S-adenosyl-L-methionine</keyword>
<keyword id="KW-0808">Transferase</keyword>
<reference key="1">
    <citation type="submission" date="2007-08" db="EMBL/GenBank/DDBJ databases">
        <authorList>
            <consortium name="The Citrobacter koseri Genome Sequencing Project"/>
            <person name="McClelland M."/>
            <person name="Sanderson E.K."/>
            <person name="Porwollik S."/>
            <person name="Spieth J."/>
            <person name="Clifton W.S."/>
            <person name="Latreille P."/>
            <person name="Courtney L."/>
            <person name="Wang C."/>
            <person name="Pepin K."/>
            <person name="Bhonagiri V."/>
            <person name="Nash W."/>
            <person name="Johnson M."/>
            <person name="Thiruvilangam P."/>
            <person name="Wilson R."/>
        </authorList>
    </citation>
    <scope>NUCLEOTIDE SEQUENCE [LARGE SCALE GENOMIC DNA]</scope>
    <source>
        <strain>ATCC BAA-895 / CDC 4225-83 / SGSC4696</strain>
    </source>
</reference>